<name>FUB9_FUSO4</name>
<sequence length="387" mass="41274">MSRTNLPIQPAKMSDATSSKPQIFSIQDLKQAASDKMSQMYRDYYNGGAMDNITLASNEAAFDRYLLRPRVLRNVSNIDMTTTLWGTKAALPLGVSPSAMHRLAHADGEVGTSKACAARNVPMILSALSNDTLEDVSGQSSDGSTPYAIQVSPFKNRQITTNLLSRAKAAGYKAVVLTVDAPMFGRRLDDLRNGFSIPPGFSFPNLSAQTQSGSGGLGGGIPDLSFDTAATWEEKIAWMKSQTDLEIWVKGVTSPLDAQIAIEQGVDGIIISNHGGRQLDTTPATIDILREIAPIAKGKTRIAIDGGFRRGSDIFKAVALGADFVFVGRIAIWGLAYDGSNGVGLALDLLINEFKLCMGLAGCSKISDITPAHLSILNAKGVLESVY</sequence>
<keyword id="KW-0560">Oxidoreductase</keyword>
<keyword id="KW-1185">Reference proteome</keyword>
<organism>
    <name type="scientific">Fusarium oxysporum f. sp. lycopersici (strain 4287 / CBS 123668 / FGSC 9935 / NRRL 34936)</name>
    <name type="common">Fusarium vascular wilt of tomato</name>
    <dbReference type="NCBI Taxonomy" id="426428"/>
    <lineage>
        <taxon>Eukaryota</taxon>
        <taxon>Fungi</taxon>
        <taxon>Dikarya</taxon>
        <taxon>Ascomycota</taxon>
        <taxon>Pezizomycotina</taxon>
        <taxon>Sordariomycetes</taxon>
        <taxon>Hypocreomycetidae</taxon>
        <taxon>Hypocreales</taxon>
        <taxon>Nectriaceae</taxon>
        <taxon>Fusarium</taxon>
        <taxon>Fusarium oxysporum species complex</taxon>
    </lineage>
</organism>
<dbReference type="EC" id="1.-.-.-" evidence="14"/>
<dbReference type="EMBL" id="DS231721">
    <property type="protein sequence ID" value="KNB17095.1"/>
    <property type="molecule type" value="Genomic_DNA"/>
</dbReference>
<dbReference type="RefSeq" id="XP_018255140.1">
    <property type="nucleotide sequence ID" value="XM_018395307.1"/>
</dbReference>
<dbReference type="SMR" id="A0A0D2YG00"/>
<dbReference type="STRING" id="426428.A0A0D2YG00"/>
<dbReference type="GeneID" id="28956314"/>
<dbReference type="KEGG" id="fox:FOXG_15238"/>
<dbReference type="VEuPathDB" id="FungiDB:FOXG_15238"/>
<dbReference type="OrthoDB" id="9905at110618"/>
<dbReference type="Proteomes" id="UP000009097">
    <property type="component" value="Unassembled WGS sequence"/>
</dbReference>
<dbReference type="GO" id="GO:0010181">
    <property type="term" value="F:FMN binding"/>
    <property type="evidence" value="ECO:0007669"/>
    <property type="project" value="InterPro"/>
</dbReference>
<dbReference type="GO" id="GO:0016491">
    <property type="term" value="F:oxidoreductase activity"/>
    <property type="evidence" value="ECO:0007669"/>
    <property type="project" value="UniProtKB-KW"/>
</dbReference>
<dbReference type="CDD" id="cd02809">
    <property type="entry name" value="alpha_hydroxyacid_oxid_FMN"/>
    <property type="match status" value="1"/>
</dbReference>
<dbReference type="FunFam" id="3.20.20.70:FF:000056">
    <property type="entry name" value="hydroxyacid oxidase 2"/>
    <property type="match status" value="1"/>
</dbReference>
<dbReference type="Gene3D" id="3.20.20.70">
    <property type="entry name" value="Aldolase class I"/>
    <property type="match status" value="1"/>
</dbReference>
<dbReference type="InterPro" id="IPR013785">
    <property type="entry name" value="Aldolase_TIM"/>
</dbReference>
<dbReference type="InterPro" id="IPR012133">
    <property type="entry name" value="Alpha-hydoxy_acid_DH_FMN"/>
</dbReference>
<dbReference type="InterPro" id="IPR000262">
    <property type="entry name" value="FMN-dep_DH"/>
</dbReference>
<dbReference type="InterPro" id="IPR037396">
    <property type="entry name" value="FMN_HAD"/>
</dbReference>
<dbReference type="InterPro" id="IPR008259">
    <property type="entry name" value="FMN_hydac_DH_AS"/>
</dbReference>
<dbReference type="PANTHER" id="PTHR10578:SF149">
    <property type="entry name" value="2-HYDROXYACID OXIDASE 2"/>
    <property type="match status" value="1"/>
</dbReference>
<dbReference type="PANTHER" id="PTHR10578">
    <property type="entry name" value="S -2-HYDROXY-ACID OXIDASE-RELATED"/>
    <property type="match status" value="1"/>
</dbReference>
<dbReference type="Pfam" id="PF01070">
    <property type="entry name" value="FMN_dh"/>
    <property type="match status" value="1"/>
</dbReference>
<dbReference type="PIRSF" id="PIRSF000138">
    <property type="entry name" value="Al-hdrx_acd_dh"/>
    <property type="match status" value="1"/>
</dbReference>
<dbReference type="SUPFAM" id="SSF51395">
    <property type="entry name" value="FMN-linked oxidoreductases"/>
    <property type="match status" value="1"/>
</dbReference>
<dbReference type="PROSITE" id="PS00557">
    <property type="entry name" value="FMN_HYDROXY_ACID_DH_1"/>
    <property type="match status" value="1"/>
</dbReference>
<dbReference type="PROSITE" id="PS51349">
    <property type="entry name" value="FMN_HYDROXY_ACID_DH_2"/>
    <property type="match status" value="1"/>
</dbReference>
<reference key="1">
    <citation type="journal article" date="2010" name="Nature">
        <title>Comparative genomics reveals mobile pathogenicity chromosomes in Fusarium.</title>
        <authorList>
            <person name="Ma L.-J."/>
            <person name="van der Does H.C."/>
            <person name="Borkovich K.A."/>
            <person name="Coleman J.J."/>
            <person name="Daboussi M.-J."/>
            <person name="Di Pietro A."/>
            <person name="Dufresne M."/>
            <person name="Freitag M."/>
            <person name="Grabherr M."/>
            <person name="Henrissat B."/>
            <person name="Houterman P.M."/>
            <person name="Kang S."/>
            <person name="Shim W.-B."/>
            <person name="Woloshuk C."/>
            <person name="Xie X."/>
            <person name="Xu J.-R."/>
            <person name="Antoniw J."/>
            <person name="Baker S.E."/>
            <person name="Bluhm B.H."/>
            <person name="Breakspear A."/>
            <person name="Brown D.W."/>
            <person name="Butchko R.A.E."/>
            <person name="Chapman S."/>
            <person name="Coulson R."/>
            <person name="Coutinho P.M."/>
            <person name="Danchin E.G.J."/>
            <person name="Diener A."/>
            <person name="Gale L.R."/>
            <person name="Gardiner D.M."/>
            <person name="Goff S."/>
            <person name="Hammond-Kosack K.E."/>
            <person name="Hilburn K."/>
            <person name="Hua-Van A."/>
            <person name="Jonkers W."/>
            <person name="Kazan K."/>
            <person name="Kodira C.D."/>
            <person name="Koehrsen M."/>
            <person name="Kumar L."/>
            <person name="Lee Y.-H."/>
            <person name="Li L."/>
            <person name="Manners J.M."/>
            <person name="Miranda-Saavedra D."/>
            <person name="Mukherjee M."/>
            <person name="Park G."/>
            <person name="Park J."/>
            <person name="Park S.-Y."/>
            <person name="Proctor R.H."/>
            <person name="Regev A."/>
            <person name="Ruiz-Roldan M.C."/>
            <person name="Sain D."/>
            <person name="Sakthikumar S."/>
            <person name="Sykes S."/>
            <person name="Schwartz D.C."/>
            <person name="Turgeon B.G."/>
            <person name="Wapinski I."/>
            <person name="Yoder O."/>
            <person name="Young S."/>
            <person name="Zeng Q."/>
            <person name="Zhou S."/>
            <person name="Galagan J."/>
            <person name="Cuomo C.A."/>
            <person name="Kistler H.C."/>
            <person name="Rep M."/>
        </authorList>
    </citation>
    <scope>NUCLEOTIDE SEQUENCE [LARGE SCALE GENOMIC DNA]</scope>
    <source>
        <strain>4287 / CBS 123668 / FGSC 9935 / NRRL 34936</strain>
    </source>
</reference>
<reference key="2">
    <citation type="submission" date="2015-03" db="UniProtKB">
        <authorList>
            <consortium name="EnsemblFungi"/>
        </authorList>
    </citation>
    <scope>IDENTIFICATION</scope>
    <source>
        <strain>4287 / CBS 123668 / FGSC 9935 / NRRL 34936</strain>
    </source>
</reference>
<reference key="3">
    <citation type="journal article" date="2006" name="Planta">
        <title>Fusaric acid induces apoptosis in saffron root-tip cells: roles of caspase-like activity, cytochrome c, and H2O2.</title>
        <authorList>
            <person name="Samadi L."/>
            <person name="Shahsavan Behboodi B."/>
        </authorList>
    </citation>
    <scope>BIOTECHNOLOGY</scope>
</reference>
<reference key="4">
    <citation type="journal article" date="2008" name="J. Appl. Microbiol.">
        <title>Bikaverin and fusaric acid from Fusarium oxysporum show antioomycete activity against Phytophthora infestans.</title>
        <authorList>
            <person name="Son S.W."/>
            <person name="Kim H.Y."/>
            <person name="Choi G.J."/>
            <person name="Lim H.K."/>
            <person name="Jang K.S."/>
            <person name="Lee S.O."/>
            <person name="Lee S."/>
            <person name="Sung N.D."/>
            <person name="Kim J.C."/>
        </authorList>
    </citation>
    <scope>BIOTECHNOLOGY</scope>
</reference>
<reference key="5">
    <citation type="journal article" date="2011" name="Arch. Pharm. Res.">
        <title>Antimycobacterial activity of fusaric acid from a mangrove endophyte and its metal complexes.</title>
        <authorList>
            <person name="Pan J.H."/>
            <person name="Chen Y."/>
            <person name="Huang Y.H."/>
            <person name="Tao Y.W."/>
            <person name="Wang J."/>
            <person name="Li Y."/>
            <person name="Peng Y."/>
            <person name="Dong T."/>
            <person name="Lai X.M."/>
            <person name="Lin Y.C."/>
        </authorList>
    </citation>
    <scope>BIOTECHNOLOGY</scope>
</reference>
<reference key="6">
    <citation type="journal article" date="2011" name="Toxicon">
        <title>Phytotoxicity of fusaric acid and analogs to cotton.</title>
        <authorList>
            <person name="Stipanovic R.D."/>
            <person name="Puckhaber L.S."/>
            <person name="Liu J."/>
            <person name="Bell A.A."/>
        </authorList>
    </citation>
    <scope>BIOTECHNOLOGY</scope>
</reference>
<reference key="7">
    <citation type="journal article" date="2012" name="Planta Med.">
        <title>In vitro acanthamoebicidal activity of fusaric acid and dehydrofusaric acid from an endophytic fungus Fusarium sp. Tlau3.</title>
        <authorList>
            <person name="Boonman N."/>
            <person name="Prachya S."/>
            <person name="Boonmee A."/>
            <person name="Kittakoop P."/>
            <person name="Wiyakrutta S."/>
            <person name="Sriubolmas N."/>
            <person name="Warit S."/>
            <person name="Dharmkrong-At Chusattayanond A."/>
        </authorList>
    </citation>
    <scope>BIOTECHNOLOGY</scope>
</reference>
<reference key="8">
    <citation type="journal article" date="2013" name="Planta">
        <title>Fusaric acid induction of programmed cell death modulated through nitric oxide signalling in tobacco suspension cells.</title>
        <authorList>
            <person name="Jiao J."/>
            <person name="Zhou B."/>
            <person name="Zhu X."/>
            <person name="Gao Z."/>
            <person name="Liang Y."/>
        </authorList>
    </citation>
    <scope>BIOTECHNOLOGY</scope>
</reference>
<reference key="9">
    <citation type="journal article" date="2013" name="PLoS ONE">
        <title>Contamination of bananas with beauvericin and fusaric acid produced by Fusarium oxysporum f. sp. cubense.</title>
        <authorList>
            <person name="Li C."/>
            <person name="Zuo C."/>
            <person name="Deng G."/>
            <person name="Kuang R."/>
            <person name="Yang Q."/>
            <person name="Hu C."/>
            <person name="Sheng O."/>
            <person name="Zhang S."/>
            <person name="Ma L."/>
            <person name="Wei Y."/>
            <person name="Yang J."/>
            <person name="Liu S."/>
            <person name="Biswas M.K."/>
            <person name="Viljoen A."/>
            <person name="Yi G."/>
        </authorList>
    </citation>
    <scope>BIOTECHNOLOGY</scope>
</reference>
<reference key="10">
    <citation type="journal article" date="2015" name="Mol. Plant Microbe Interact.">
        <title>Identification of a 12-gene fusaric acid biosynthetic gene cluster in Fusarium species through comparative and functional genomics.</title>
        <authorList>
            <person name="Brown D.W."/>
            <person name="Lee S.H."/>
            <person name="Kim L.H."/>
            <person name="Ryu J.G."/>
            <person name="Lee S."/>
            <person name="Seo Y."/>
            <person name="Kim Y.H."/>
            <person name="Busman M."/>
            <person name="Yun S.H."/>
            <person name="Proctor R.H."/>
            <person name="Lee T."/>
        </authorList>
    </citation>
    <scope>FUNCTION</scope>
    <scope>CATALYTIC ACTIVITY</scope>
</reference>
<proteinExistence type="evidence at protein level"/>
<gene>
    <name evidence="12" type="primary">FUB8</name>
    <name type="ORF">FOXG_15238</name>
</gene>
<feature type="chain" id="PRO_0000437350" description="Oxidase FUB9">
    <location>
        <begin position="1"/>
        <end position="387"/>
    </location>
</feature>
<feature type="domain" description="FMN hydroxy acid dehydrogenase" evidence="2">
    <location>
        <begin position="18"/>
        <end position="379"/>
    </location>
</feature>
<feature type="region of interest" description="Disordered" evidence="3">
    <location>
        <begin position="1"/>
        <end position="20"/>
    </location>
</feature>
<feature type="active site" description="Proton acceptor" evidence="2">
    <location>
        <position position="274"/>
    </location>
</feature>
<feature type="binding site" evidence="2">
    <location>
        <position position="44"/>
    </location>
    <ligand>
        <name>a 2-oxocarboxylate</name>
        <dbReference type="ChEBI" id="CHEBI:35179"/>
    </ligand>
</feature>
<feature type="binding site" evidence="2">
    <location>
        <position position="126"/>
    </location>
    <ligand>
        <name>FMN</name>
        <dbReference type="ChEBI" id="CHEBI:58210"/>
    </ligand>
</feature>
<feature type="binding site" evidence="2">
    <location>
        <position position="150"/>
    </location>
    <ligand>
        <name>FMN</name>
        <dbReference type="ChEBI" id="CHEBI:58210"/>
    </ligand>
</feature>
<feature type="binding site" evidence="2">
    <location>
        <position position="178"/>
    </location>
    <ligand>
        <name>FMN</name>
        <dbReference type="ChEBI" id="CHEBI:58210"/>
    </ligand>
</feature>
<feature type="binding site" evidence="2">
    <location>
        <position position="187"/>
    </location>
    <ligand>
        <name>a 2-oxocarboxylate</name>
        <dbReference type="ChEBI" id="CHEBI:35179"/>
    </ligand>
</feature>
<feature type="binding site" evidence="2">
    <location>
        <position position="250"/>
    </location>
    <ligand>
        <name>FMN</name>
        <dbReference type="ChEBI" id="CHEBI:58210"/>
    </ligand>
</feature>
<feature type="binding site" evidence="2">
    <location>
        <position position="277"/>
    </location>
    <ligand>
        <name>a 2-oxocarboxylate</name>
        <dbReference type="ChEBI" id="CHEBI:35179"/>
    </ligand>
</feature>
<feature type="binding site" evidence="2">
    <location>
        <begin position="305"/>
        <end position="309"/>
    </location>
    <ligand>
        <name>FMN</name>
        <dbReference type="ChEBI" id="CHEBI:58210"/>
    </ligand>
</feature>
<feature type="binding site" evidence="2">
    <location>
        <begin position="328"/>
        <end position="329"/>
    </location>
    <ligand>
        <name>FMN</name>
        <dbReference type="ChEBI" id="CHEBI:58210"/>
    </ligand>
</feature>
<comment type="function">
    <text evidence="1 11">Oxidase; part of the gene cluster that mediates the biosynthesis of fusaric acid, a mycotoxin with low to moderate toxicity to animals and humans, but with high phytotoxic properties (PubMed:25372119). L-aspartate is suggested as fusaric acid amino acid precursor that is activated and further processed to O-acetyl-L-homoserine by cluster enzymes aspartate kinase FUB3 and homoserine O-acetyltransferase FUB5, as well as enzymes of the primary metabolism (By similarity). The polyketide synthase (PKS) FUB1 generates the triketide trans-2-hexenal which is presumptively released by the hydrolase FUB4 and linked to the NRPS-bound amino acid precursor by NAD(P)-dependent dehydrogenase FUB6 (By similarity). FUB1, FUB4, and the non-canonical NRPS Fub8 may form an enzyme complex (By similarity). Further processing of the NRPS-bound intermediate might be carried out by FUB6 and the sulfhydrylase FUB7, enabling a spontaneous electrocyclization to close the carbon backbone of fusaric acid (By similarity). Dihydrofusaric acid is likely to be released via reduction by the thioester reductase (TR) domain of FUB8 whereupon the final oxidation to fusaric acid may (also) be performed by the FMN-dependent dehydrogenase FUB9 (By similarity).</text>
</comment>
<comment type="cofactor">
    <cofactor evidence="2">
        <name>FMN</name>
        <dbReference type="ChEBI" id="CHEBI:58210"/>
    </cofactor>
</comment>
<comment type="pathway">
    <text evidence="11">Mycotoxin biosynthesis.</text>
</comment>
<comment type="biotechnology">
    <text evidence="4 5 6 7 8 9 10">Fusaric acid is phytotoxic to plants such as cotton and banana (PubMed:20955724, PubMed:23922960). It has been shown to induce programmed cell death in plants (PubMed:16868776, PubMed:23838885). In addition to a mild toxicity to animals, fusaric acid exhibits acanthamoebicidal, antioomycete, and antimycobacterial activities (PubMed:17927749, PubMed:21811925, PubMed:22864988).</text>
</comment>
<comment type="similarity">
    <text evidence="13">Belongs to the FMN-dependent alpha-hydroxy acid dehydrogenase family.</text>
</comment>
<protein>
    <recommendedName>
        <fullName evidence="12">Oxidase FUB9</fullName>
        <ecNumber evidence="14">1.-.-.-</ecNumber>
    </recommendedName>
    <alternativeName>
        <fullName evidence="12">Fusaric acid biosynthesis protein 9</fullName>
    </alternativeName>
</protein>
<accession>A0A0D2YG00</accession>
<accession>A0A0J9W2J1</accession>
<evidence type="ECO:0000250" key="1">
    <source>
        <dbReference type="UniProtKB" id="S0DRI9"/>
    </source>
</evidence>
<evidence type="ECO:0000255" key="2">
    <source>
        <dbReference type="PROSITE-ProRule" id="PRU00683"/>
    </source>
</evidence>
<evidence type="ECO:0000256" key="3">
    <source>
        <dbReference type="SAM" id="MobiDB-lite"/>
    </source>
</evidence>
<evidence type="ECO:0000269" key="4">
    <source>
    </source>
</evidence>
<evidence type="ECO:0000269" key="5">
    <source>
    </source>
</evidence>
<evidence type="ECO:0000269" key="6">
    <source>
    </source>
</evidence>
<evidence type="ECO:0000269" key="7">
    <source>
    </source>
</evidence>
<evidence type="ECO:0000269" key="8">
    <source>
    </source>
</evidence>
<evidence type="ECO:0000269" key="9">
    <source>
    </source>
</evidence>
<evidence type="ECO:0000269" key="10">
    <source>
    </source>
</evidence>
<evidence type="ECO:0000269" key="11">
    <source>
    </source>
</evidence>
<evidence type="ECO:0000303" key="12">
    <source>
    </source>
</evidence>
<evidence type="ECO:0000305" key="13"/>
<evidence type="ECO:0000305" key="14">
    <source>
    </source>
</evidence>